<organism>
    <name type="scientific">Acinetobacter baumannii (strain ATCC 17978 / DSM 105126 / CIP 53.77 / LMG 1025 / NCDC KC755 / 5377)</name>
    <dbReference type="NCBI Taxonomy" id="400667"/>
    <lineage>
        <taxon>Bacteria</taxon>
        <taxon>Pseudomonadati</taxon>
        <taxon>Pseudomonadota</taxon>
        <taxon>Gammaproteobacteria</taxon>
        <taxon>Moraxellales</taxon>
        <taxon>Moraxellaceae</taxon>
        <taxon>Acinetobacter</taxon>
        <taxon>Acinetobacter calcoaceticus/baumannii complex</taxon>
    </lineage>
</organism>
<name>NFUA_ACIBT</name>
<proteinExistence type="inferred from homology"/>
<gene>
    <name evidence="1" type="primary">nfuA</name>
    <name type="ordered locus">A1S_0979</name>
</gene>
<protein>
    <recommendedName>
        <fullName evidence="1">Fe/S biogenesis protein NfuA</fullName>
    </recommendedName>
</protein>
<keyword id="KW-0004">4Fe-4S</keyword>
<keyword id="KW-0408">Iron</keyword>
<keyword id="KW-0411">Iron-sulfur</keyword>
<keyword id="KW-0479">Metal-binding</keyword>
<dbReference type="EMBL" id="CP000521">
    <property type="protein sequence ID" value="ABO11411.2"/>
    <property type="molecule type" value="Genomic_DNA"/>
</dbReference>
<dbReference type="RefSeq" id="WP_000102721.1">
    <property type="nucleotide sequence ID" value="NZ_CP053098.1"/>
</dbReference>
<dbReference type="SMR" id="A3M3B7"/>
<dbReference type="GeneID" id="92892942"/>
<dbReference type="KEGG" id="acb:A1S_0979"/>
<dbReference type="HOGENOM" id="CLU_094569_0_0_6"/>
<dbReference type="GO" id="GO:0051539">
    <property type="term" value="F:4 iron, 4 sulfur cluster binding"/>
    <property type="evidence" value="ECO:0007669"/>
    <property type="project" value="UniProtKB-UniRule"/>
</dbReference>
<dbReference type="GO" id="GO:0005506">
    <property type="term" value="F:iron ion binding"/>
    <property type="evidence" value="ECO:0007669"/>
    <property type="project" value="InterPro"/>
</dbReference>
<dbReference type="GO" id="GO:0016226">
    <property type="term" value="P:iron-sulfur cluster assembly"/>
    <property type="evidence" value="ECO:0007669"/>
    <property type="project" value="UniProtKB-UniRule"/>
</dbReference>
<dbReference type="GO" id="GO:0051604">
    <property type="term" value="P:protein maturation"/>
    <property type="evidence" value="ECO:0007669"/>
    <property type="project" value="UniProtKB-UniRule"/>
</dbReference>
<dbReference type="Gene3D" id="3.30.300.130">
    <property type="entry name" value="Fe-S cluster assembly (FSCA)"/>
    <property type="match status" value="1"/>
</dbReference>
<dbReference type="Gene3D" id="2.60.300.12">
    <property type="entry name" value="HesB-like domain"/>
    <property type="match status" value="1"/>
</dbReference>
<dbReference type="HAMAP" id="MF_01637">
    <property type="entry name" value="Fe_S_biogen_NfuA"/>
    <property type="match status" value="1"/>
</dbReference>
<dbReference type="InterPro" id="IPR017726">
    <property type="entry name" value="Fe/S_biogenesis_protein_NfuA"/>
</dbReference>
<dbReference type="InterPro" id="IPR000361">
    <property type="entry name" value="FeS_biogenesis"/>
</dbReference>
<dbReference type="InterPro" id="IPR034904">
    <property type="entry name" value="FSCA_dom_sf"/>
</dbReference>
<dbReference type="InterPro" id="IPR035903">
    <property type="entry name" value="HesB-like_dom_sf"/>
</dbReference>
<dbReference type="InterPro" id="IPR001075">
    <property type="entry name" value="NIF_FeS_clus_asmbl_NifU_C"/>
</dbReference>
<dbReference type="NCBIfam" id="TIGR03341">
    <property type="entry name" value="YhgI_GntY"/>
    <property type="match status" value="1"/>
</dbReference>
<dbReference type="PANTHER" id="PTHR11178:SF51">
    <property type="entry name" value="FE_S BIOGENESIS PROTEIN NFUA"/>
    <property type="match status" value="1"/>
</dbReference>
<dbReference type="PANTHER" id="PTHR11178">
    <property type="entry name" value="IRON-SULFUR CLUSTER SCAFFOLD PROTEIN NFU-RELATED"/>
    <property type="match status" value="1"/>
</dbReference>
<dbReference type="Pfam" id="PF01521">
    <property type="entry name" value="Fe-S_biosyn"/>
    <property type="match status" value="1"/>
</dbReference>
<dbReference type="Pfam" id="PF01106">
    <property type="entry name" value="NifU"/>
    <property type="match status" value="1"/>
</dbReference>
<dbReference type="SUPFAM" id="SSF117916">
    <property type="entry name" value="Fe-S cluster assembly (FSCA) domain-like"/>
    <property type="match status" value="1"/>
</dbReference>
<dbReference type="SUPFAM" id="SSF89360">
    <property type="entry name" value="HesB-like domain"/>
    <property type="match status" value="1"/>
</dbReference>
<evidence type="ECO:0000255" key="1">
    <source>
        <dbReference type="HAMAP-Rule" id="MF_01637"/>
    </source>
</evidence>
<feature type="chain" id="PRO_1000186731" description="Fe/S biogenesis protein NfuA">
    <location>
        <begin position="1"/>
        <end position="212"/>
    </location>
</feature>
<feature type="binding site" evidence="1">
    <location>
        <position position="169"/>
    </location>
    <ligand>
        <name>[4Fe-4S] cluster</name>
        <dbReference type="ChEBI" id="CHEBI:49883"/>
    </ligand>
</feature>
<feature type="binding site" evidence="1">
    <location>
        <position position="172"/>
    </location>
    <ligand>
        <name>[4Fe-4S] cluster</name>
        <dbReference type="ChEBI" id="CHEBI:49883"/>
    </ligand>
</feature>
<sequence>MSTENTNTAVAEEIPNLLITPSAQEYLHELLAKQNTPGIGVRIFVEHPGTPRAECCMAYSAPEEVVPTDYKQDYPDFPAYIDAPSIPYLLDAVIDYNKDRFGGQLTFRAPNSKVPRVGPDASIEERITYVLQAEINPGLAGHGGNCSLVEVQDDPEHGLTAVLKFGGGCQGCSAIDVTLKQGVETTLKEHIPELQRVVDQTDHTQAEGAYFK</sequence>
<comment type="function">
    <text evidence="1">Involved in iron-sulfur cluster biogenesis. Binds a 4Fe-4S cluster, can transfer this cluster to apoproteins, and thereby intervenes in the maturation of Fe/S proteins. Could also act as a scaffold/chaperone for damaged Fe/S proteins.</text>
</comment>
<comment type="cofactor">
    <cofactor evidence="1">
        <name>[4Fe-4S] cluster</name>
        <dbReference type="ChEBI" id="CHEBI:49883"/>
    </cofactor>
    <text evidence="1">Binds 1 [4Fe-4S] cluster per subunit. The cluster is presumably bound at the interface of two monomers.</text>
</comment>
<comment type="subunit">
    <text evidence="1">Homodimer.</text>
</comment>
<comment type="similarity">
    <text evidence="1">Belongs to the NfuA family.</text>
</comment>
<accession>A3M3B7</accession>
<reference key="1">
    <citation type="journal article" date="2007" name="Genes Dev.">
        <title>New insights into Acinetobacter baumannii pathogenesis revealed by high-density pyrosequencing and transposon mutagenesis.</title>
        <authorList>
            <person name="Smith M.G."/>
            <person name="Gianoulis T.A."/>
            <person name="Pukatzki S."/>
            <person name="Mekalanos J.J."/>
            <person name="Ornston L.N."/>
            <person name="Gerstein M."/>
            <person name="Snyder M."/>
        </authorList>
    </citation>
    <scope>NUCLEOTIDE SEQUENCE [LARGE SCALE GENOMIC DNA]</scope>
    <source>
        <strain>ATCC 17978 / DSM 105126 / CIP 53.77 / LMG 1025 / NCDC KC755 / 5377</strain>
    </source>
</reference>